<comment type="function">
    <text evidence="1 4">Mitochondrial membrane ATP synthase (F(1)F(0) ATP synthase or Complex V) produces ATP from ADP in the presence of a proton gradient across the membrane which is generated by electron transport complexes of the respiratory chain (Probable). F-type ATPases consist of two structural domains, F(1) - containing the extramembraneous catalytic core and F(0) - containing the membrane proton channel, linked together by a central stalk and a peripheral stalk (Probable). During catalysis, ATP synthesis in the catalytic domain of F(1) is coupled via a rotary mechanism of the central stalk subunits to proton translocation (Probable). Part of the complex F(0) domain (Probable). Confers tolerance to several abiotic stresses (e.g. salt, mannitol, drought, oxidative and cold stresses), probably by providing additional energy needed for cell homeostasis (By similarity).</text>
</comment>
<comment type="subcellular location">
    <subcellularLocation>
        <location evidence="1">Mitochondrion inner membrane</location>
        <topology evidence="2">Single-pass membrane protein</topology>
    </subcellularLocation>
</comment>
<comment type="similarity">
    <text evidence="4">Belongs to the ATPase 6 subunit family.</text>
</comment>
<organism>
    <name type="scientific">Solanum tuberosum</name>
    <name type="common">Potato</name>
    <dbReference type="NCBI Taxonomy" id="4113"/>
    <lineage>
        <taxon>Eukaryota</taxon>
        <taxon>Viridiplantae</taxon>
        <taxon>Streptophyta</taxon>
        <taxon>Embryophyta</taxon>
        <taxon>Tracheophyta</taxon>
        <taxon>Spermatophyta</taxon>
        <taxon>Magnoliopsida</taxon>
        <taxon>eudicotyledons</taxon>
        <taxon>Gunneridae</taxon>
        <taxon>Pentapetalae</taxon>
        <taxon>asterids</taxon>
        <taxon>lamiids</taxon>
        <taxon>Solanales</taxon>
        <taxon>Solanaceae</taxon>
        <taxon>Solanoideae</taxon>
        <taxon>Solaneae</taxon>
        <taxon>Solanum</taxon>
    </lineage>
</organism>
<accession>P80497</accession>
<accession>M1A649</accession>
<proteinExistence type="evidence at protein level"/>
<name>ATP6_SOLTU</name>
<protein>
    <recommendedName>
        <fullName evidence="4">ATP synthase small subunit 6, mitochondrial</fullName>
        <shortName evidence="4">MtATP6</shortName>
    </recommendedName>
    <alternativeName>
        <fullName evidence="3">ATP synthase 6 kDa subunit, mitochondrial</fullName>
    </alternativeName>
</protein>
<sequence>MRQFDPWPVFFRREWSRNWPFLVGFAVTGAIITKMSLGFTEEERKNSRFAQRHKN</sequence>
<keyword id="KW-0138">CF(0)</keyword>
<keyword id="KW-0903">Direct protein sequencing</keyword>
<keyword id="KW-0375">Hydrogen ion transport</keyword>
<keyword id="KW-0406">Ion transport</keyword>
<keyword id="KW-0472">Membrane</keyword>
<keyword id="KW-0496">Mitochondrion</keyword>
<keyword id="KW-0999">Mitochondrion inner membrane</keyword>
<keyword id="KW-1185">Reference proteome</keyword>
<keyword id="KW-0346">Stress response</keyword>
<keyword id="KW-0809">Transit peptide</keyword>
<keyword id="KW-0812">Transmembrane</keyword>
<keyword id="KW-1133">Transmembrane helix</keyword>
<keyword id="KW-0813">Transport</keyword>
<feature type="transit peptide" description="Mitochondrion" evidence="2">
    <location>
        <begin position="1"/>
        <end position="15"/>
    </location>
</feature>
<feature type="chain" id="PRO_0000071723" description="ATP synthase small subunit 6, mitochondrial">
    <location>
        <begin position="16"/>
        <end position="55"/>
    </location>
</feature>
<feature type="transmembrane region" description="Helical" evidence="2">
    <location>
        <begin position="20"/>
        <end position="39"/>
    </location>
</feature>
<feature type="sequence conflict" description="In Ref. 2; AA sequence." evidence="4" ref="2">
    <original>W</original>
    <variation>Q</variation>
    <location>
        <position position="19"/>
    </location>
</feature>
<evidence type="ECO:0000250" key="1">
    <source>
        <dbReference type="UniProtKB" id="P0DO44"/>
    </source>
</evidence>
<evidence type="ECO:0000255" key="2"/>
<evidence type="ECO:0000303" key="3">
    <source>
    </source>
</evidence>
<evidence type="ECO:0000305" key="4"/>
<dbReference type="FunCoup" id="P80497">
    <property type="interactions" value="1136"/>
</dbReference>
<dbReference type="STRING" id="4113.P80497"/>
<dbReference type="PaxDb" id="4113-PGSC0003DMT400015500"/>
<dbReference type="EnsemblPlants" id="PGSC0003DMT400015500">
    <property type="protein sequence ID" value="PGSC0003DMT400015500"/>
    <property type="gene ID" value="PGSC0003DMG402006052"/>
</dbReference>
<dbReference type="Gramene" id="PGSC0003DMT400015500">
    <property type="protein sequence ID" value="PGSC0003DMT400015500"/>
    <property type="gene ID" value="PGSC0003DMG402006052"/>
</dbReference>
<dbReference type="eggNOG" id="ENOG502S6YY">
    <property type="taxonomic scope" value="Eukaryota"/>
</dbReference>
<dbReference type="HOGENOM" id="CLU_200132_0_0_1"/>
<dbReference type="InParanoid" id="P80497"/>
<dbReference type="OMA" id="VYLCICS"/>
<dbReference type="Proteomes" id="UP000011115">
    <property type="component" value="Unassembled WGS sequence"/>
</dbReference>
<dbReference type="GO" id="GO:0005743">
    <property type="term" value="C:mitochondrial inner membrane"/>
    <property type="evidence" value="ECO:0007669"/>
    <property type="project" value="UniProtKB-SubCell"/>
</dbReference>
<dbReference type="GO" id="GO:0045259">
    <property type="term" value="C:proton-transporting ATP synthase complex"/>
    <property type="evidence" value="ECO:0007669"/>
    <property type="project" value="UniProtKB-KW"/>
</dbReference>
<dbReference type="GO" id="GO:1902600">
    <property type="term" value="P:proton transmembrane transport"/>
    <property type="evidence" value="ECO:0007669"/>
    <property type="project" value="UniProtKB-KW"/>
</dbReference>
<dbReference type="InterPro" id="IPR052867">
    <property type="entry name" value="ATP_Synthase_Subunit_6"/>
</dbReference>
<dbReference type="PANTHER" id="PTHR34565:SF3">
    <property type="entry name" value="ATP SYNTHASE SMALL SUBUNIT 6, MITOCHONDRIAL"/>
    <property type="match status" value="1"/>
</dbReference>
<dbReference type="PANTHER" id="PTHR34565">
    <property type="entry name" value="TRANSMEMBRANE PROTEIN"/>
    <property type="match status" value="1"/>
</dbReference>
<reference key="1">
    <citation type="journal article" date="2011" name="Nature">
        <title>Genome sequence and analysis of the tuber crop potato.</title>
        <authorList>
            <consortium name="The Potato Genome Sequencing Consortium"/>
        </authorList>
    </citation>
    <scope>NUCLEOTIDE SEQUENCE [LARGE SCALE GENOMIC DNA]</scope>
    <source>
        <strain>cv. DM1-3 516 R44</strain>
    </source>
</reference>
<reference key="2">
    <citation type="journal article" date="1996" name="Plant J.">
        <title>New insights into the composition, molecular mass and stoichiometry of the protein complexes of plant mitochondria.</title>
        <authorList>
            <person name="Jansch L."/>
            <person name="Kruft V."/>
            <person name="Schmitz U.K."/>
            <person name="Braun H.P."/>
        </authorList>
    </citation>
    <scope>PROTEIN SEQUENCE</scope>
    <source>
        <tissue>Tuber</tissue>
    </source>
</reference>